<dbReference type="EC" id="5.3.1.23" evidence="1"/>
<dbReference type="EMBL" id="CP000102">
    <property type="protein sequence ID" value="ABC57407.1"/>
    <property type="molecule type" value="Genomic_DNA"/>
</dbReference>
<dbReference type="SMR" id="Q2NFJ6"/>
<dbReference type="STRING" id="339860.Msp_1023"/>
<dbReference type="KEGG" id="mst:Msp_1023"/>
<dbReference type="eggNOG" id="arCOG01123">
    <property type="taxonomic scope" value="Archaea"/>
</dbReference>
<dbReference type="HOGENOM" id="CLU_016218_1_2_2"/>
<dbReference type="OrthoDB" id="45195at2157"/>
<dbReference type="Proteomes" id="UP000001931">
    <property type="component" value="Chromosome"/>
</dbReference>
<dbReference type="GO" id="GO:0046523">
    <property type="term" value="F:S-methyl-5-thioribose-1-phosphate isomerase activity"/>
    <property type="evidence" value="ECO:0007669"/>
    <property type="project" value="UniProtKB-UniRule"/>
</dbReference>
<dbReference type="GO" id="GO:0019509">
    <property type="term" value="P:L-methionine salvage from methylthioadenosine"/>
    <property type="evidence" value="ECO:0007669"/>
    <property type="project" value="UniProtKB-UniRule"/>
</dbReference>
<dbReference type="FunFam" id="1.20.120.420:FF:000003">
    <property type="entry name" value="Methylthioribose-1-phosphate isomerase"/>
    <property type="match status" value="1"/>
</dbReference>
<dbReference type="FunFam" id="3.40.50.10470:FF:000006">
    <property type="entry name" value="Methylthioribose-1-phosphate isomerase"/>
    <property type="match status" value="1"/>
</dbReference>
<dbReference type="Gene3D" id="1.20.120.420">
    <property type="entry name" value="translation initiation factor eif-2b, domain 1"/>
    <property type="match status" value="1"/>
</dbReference>
<dbReference type="Gene3D" id="3.40.50.10470">
    <property type="entry name" value="Translation initiation factor eif-2b, domain 2"/>
    <property type="match status" value="1"/>
</dbReference>
<dbReference type="HAMAP" id="MF_01678">
    <property type="entry name" value="Salvage_MtnA"/>
    <property type="match status" value="1"/>
</dbReference>
<dbReference type="InterPro" id="IPR000649">
    <property type="entry name" value="IF-2B-related"/>
</dbReference>
<dbReference type="InterPro" id="IPR005251">
    <property type="entry name" value="IF-M1Pi"/>
</dbReference>
<dbReference type="InterPro" id="IPR042529">
    <property type="entry name" value="IF_2B-like_C"/>
</dbReference>
<dbReference type="InterPro" id="IPR011559">
    <property type="entry name" value="Initiation_fac_2B_a/b/d"/>
</dbReference>
<dbReference type="InterPro" id="IPR027363">
    <property type="entry name" value="M1Pi_N"/>
</dbReference>
<dbReference type="InterPro" id="IPR037171">
    <property type="entry name" value="NagB/RpiA_transferase-like"/>
</dbReference>
<dbReference type="NCBIfam" id="TIGR00524">
    <property type="entry name" value="eIF-2B_rel"/>
    <property type="match status" value="1"/>
</dbReference>
<dbReference type="NCBIfam" id="NF004326">
    <property type="entry name" value="PRK05720.1"/>
    <property type="match status" value="1"/>
</dbReference>
<dbReference type="NCBIfam" id="TIGR00512">
    <property type="entry name" value="salvage_mtnA"/>
    <property type="match status" value="1"/>
</dbReference>
<dbReference type="PANTHER" id="PTHR43475">
    <property type="entry name" value="METHYLTHIORIBOSE-1-PHOSPHATE ISOMERASE"/>
    <property type="match status" value="1"/>
</dbReference>
<dbReference type="PANTHER" id="PTHR43475:SF1">
    <property type="entry name" value="METHYLTHIORIBOSE-1-PHOSPHATE ISOMERASE"/>
    <property type="match status" value="1"/>
</dbReference>
<dbReference type="Pfam" id="PF01008">
    <property type="entry name" value="IF-2B"/>
    <property type="match status" value="1"/>
</dbReference>
<dbReference type="SUPFAM" id="SSF100950">
    <property type="entry name" value="NagB/RpiA/CoA transferase-like"/>
    <property type="match status" value="1"/>
</dbReference>
<protein>
    <recommendedName>
        <fullName evidence="1">Putative methylthioribose-1-phosphate isomerase</fullName>
        <shortName evidence="1">M1Pi</shortName>
        <shortName evidence="1">MTR-1-P isomerase</shortName>
        <ecNumber evidence="1">5.3.1.23</ecNumber>
    </recommendedName>
    <alternativeName>
        <fullName evidence="1">MTNA-like protein</fullName>
        <shortName evidence="1">aMTNA</shortName>
    </alternativeName>
    <alternativeName>
        <fullName evidence="1">S-methyl-5-thioribose-1-phosphate isomerase</fullName>
    </alternativeName>
</protein>
<reference key="1">
    <citation type="journal article" date="2006" name="J. Bacteriol.">
        <title>The genome sequence of Methanosphaera stadtmanae reveals why this human intestinal archaeon is restricted to methanol and H2 for methane formation and ATP synthesis.</title>
        <authorList>
            <person name="Fricke W.F."/>
            <person name="Seedorf H."/>
            <person name="Henne A."/>
            <person name="Kruer M."/>
            <person name="Liesegang H."/>
            <person name="Hedderich R."/>
            <person name="Gottschalk G."/>
            <person name="Thauer R.K."/>
        </authorList>
    </citation>
    <scope>NUCLEOTIDE SEQUENCE [LARGE SCALE GENOMIC DNA]</scope>
    <source>
        <strain>ATCC 43021 / DSM 3091 / JCM 11832 / MCB-3</strain>
    </source>
</reference>
<accession>Q2NFJ6</accession>
<organism>
    <name type="scientific">Methanosphaera stadtmanae (strain ATCC 43021 / DSM 3091 / JCM 11832 / MCB-3)</name>
    <dbReference type="NCBI Taxonomy" id="339860"/>
    <lineage>
        <taxon>Archaea</taxon>
        <taxon>Methanobacteriati</taxon>
        <taxon>Methanobacteriota</taxon>
        <taxon>Methanomada group</taxon>
        <taxon>Methanobacteria</taxon>
        <taxon>Methanobacteriales</taxon>
        <taxon>Methanobacteriaceae</taxon>
        <taxon>Methanosphaera</taxon>
    </lineage>
</organism>
<keyword id="KW-0028">Amino-acid biosynthesis</keyword>
<keyword id="KW-0413">Isomerase</keyword>
<keyword id="KW-0486">Methionine biosynthesis</keyword>
<keyword id="KW-1185">Reference proteome</keyword>
<sequence>MIRTLYWENNRLFLLDQTKLPHTIEYVECRTYTDVIDGIKTMKVRGAPAIGVSAAYGMALGELAGEDMDVIGDEIKSARPTAVNLFWAVDKVLDLVSRGKSAVDVAIEMEKDDVAINKKIGEYGNSIIDDNDTILTHCNAGALACAGYGTALGVIRAAHEANKNIDVICDETRPVLQGARLSVFEMQQENIPVRLIVDGAAGHMMQKGEVDKVIIGADRVAKDGVANKIGSLMVALAAKRYDIPFYVAAPMSTFDFENNIFDTIIEQRLPEEVLCINGKYISKKQTNVENPAFDIVESDLITGIITEEGIKKPL</sequence>
<name>MTNA_METST</name>
<evidence type="ECO:0000255" key="1">
    <source>
        <dbReference type="HAMAP-Rule" id="MF_01678"/>
    </source>
</evidence>
<evidence type="ECO:0000305" key="2"/>
<proteinExistence type="inferred from homology"/>
<feature type="chain" id="PRO_0000401968" description="Putative methylthioribose-1-phosphate isomerase">
    <location>
        <begin position="1"/>
        <end position="314"/>
    </location>
</feature>
<feature type="active site" description="Proton donor" evidence="1">
    <location>
        <position position="218"/>
    </location>
</feature>
<feature type="binding site" evidence="1">
    <location>
        <begin position="45"/>
        <end position="47"/>
    </location>
    <ligand>
        <name>substrate</name>
    </ligand>
</feature>
<feature type="binding site" evidence="1">
    <location>
        <position position="79"/>
    </location>
    <ligand>
        <name>substrate</name>
    </ligand>
</feature>
<feature type="binding site" evidence="1">
    <location>
        <position position="177"/>
    </location>
    <ligand>
        <name>substrate</name>
    </ligand>
</feature>
<feature type="binding site" evidence="1">
    <location>
        <begin position="227"/>
        <end position="228"/>
    </location>
    <ligand>
        <name>substrate</name>
    </ligand>
</feature>
<feature type="site" description="Transition state stabilizer" evidence="1">
    <location>
        <position position="138"/>
    </location>
</feature>
<comment type="function">
    <text evidence="1">Catalyzes the interconversion of methylthioribose-1-phosphate (MTR-1-P) into methylthioribulose-1-phosphate (MTRu-1-P).</text>
</comment>
<comment type="catalytic activity">
    <reaction evidence="1">
        <text>5-(methylsulfanyl)-alpha-D-ribose 1-phosphate = 5-(methylsulfanyl)-D-ribulose 1-phosphate</text>
        <dbReference type="Rhea" id="RHEA:19989"/>
        <dbReference type="ChEBI" id="CHEBI:58533"/>
        <dbReference type="ChEBI" id="CHEBI:58548"/>
        <dbReference type="EC" id="5.3.1.23"/>
    </reaction>
</comment>
<comment type="similarity">
    <text evidence="2">Belongs to the eIF-2B alpha/beta/delta subunits family. MtnA subfamily.</text>
</comment>
<gene>
    <name type="ordered locus">Msp_1023</name>
</gene>